<protein>
    <recommendedName>
        <fullName evidence="1">Negative modulator of initiation of replication</fullName>
    </recommendedName>
</protein>
<sequence length="174" mass="19392">MKNIEIEDDLYAYIASQTQHIGETASDILRRLVMPENTVVKTVVAAKPSATTKKPVGDVFSQITTDELSEYPKMVERFLKILSVLESMHGAQFDEVLTLSGRNRVYFAKDKETLLQASSVTNPKQIGESTFWVMTNNNTAKKASLIKEVAEVLGYNANDGQRLAALFAPELYED</sequence>
<comment type="function">
    <text evidence="1">Negative regulator of replication initiation, which contributes to regulation of DNA replication and ensures that replication initiation occurs exactly once per chromosome per cell cycle. Binds to pairs of hemimethylated GATC sequences in the oriC region, thus preventing assembly of replication proteins and re-initiation at newly replicated origins. Repression is relieved when the region becomes fully methylated.</text>
</comment>
<comment type="subunit">
    <text evidence="1">Homodimer. Polymerizes to form helical filaments.</text>
</comment>
<comment type="subcellular location">
    <subcellularLocation>
        <location evidence="1">Cytoplasm</location>
    </subcellularLocation>
</comment>
<comment type="similarity">
    <text evidence="1">Belongs to the SeqA family.</text>
</comment>
<accession>Q15TS1</accession>
<name>SEQA_PSEA6</name>
<keyword id="KW-0963">Cytoplasm</keyword>
<keyword id="KW-0236">DNA replication inhibitor</keyword>
<keyword id="KW-0238">DNA-binding</keyword>
<organism>
    <name type="scientific">Pseudoalteromonas atlantica (strain T6c / ATCC BAA-1087)</name>
    <dbReference type="NCBI Taxonomy" id="3042615"/>
    <lineage>
        <taxon>Bacteria</taxon>
        <taxon>Pseudomonadati</taxon>
        <taxon>Pseudomonadota</taxon>
        <taxon>Gammaproteobacteria</taxon>
        <taxon>Alteromonadales</taxon>
        <taxon>Alteromonadaceae</taxon>
        <taxon>Paraglaciecola</taxon>
    </lineage>
</organism>
<gene>
    <name evidence="1" type="primary">seqA</name>
    <name type="ordered locus">Patl_2199</name>
</gene>
<proteinExistence type="inferred from homology"/>
<feature type="chain" id="PRO_0000413931" description="Negative modulator of initiation of replication">
    <location>
        <begin position="1"/>
        <end position="174"/>
    </location>
</feature>
<dbReference type="EMBL" id="CP000388">
    <property type="protein sequence ID" value="ABG40717.1"/>
    <property type="molecule type" value="Genomic_DNA"/>
</dbReference>
<dbReference type="RefSeq" id="WP_011575000.1">
    <property type="nucleotide sequence ID" value="NC_008228.1"/>
</dbReference>
<dbReference type="SMR" id="Q15TS1"/>
<dbReference type="STRING" id="342610.Patl_2199"/>
<dbReference type="KEGG" id="pat:Patl_2199"/>
<dbReference type="eggNOG" id="COG3057">
    <property type="taxonomic scope" value="Bacteria"/>
</dbReference>
<dbReference type="HOGENOM" id="CLU_099733_0_0_6"/>
<dbReference type="OrthoDB" id="5591069at2"/>
<dbReference type="Proteomes" id="UP000001981">
    <property type="component" value="Chromosome"/>
</dbReference>
<dbReference type="GO" id="GO:0005737">
    <property type="term" value="C:cytoplasm"/>
    <property type="evidence" value="ECO:0007669"/>
    <property type="project" value="UniProtKB-SubCell"/>
</dbReference>
<dbReference type="GO" id="GO:0003677">
    <property type="term" value="F:DNA binding"/>
    <property type="evidence" value="ECO:0007669"/>
    <property type="project" value="UniProtKB-UniRule"/>
</dbReference>
<dbReference type="GO" id="GO:0032297">
    <property type="term" value="P:negative regulation of DNA-templated DNA replication initiation"/>
    <property type="evidence" value="ECO:0007669"/>
    <property type="project" value="UniProtKB-UniRule"/>
</dbReference>
<dbReference type="GO" id="GO:0006355">
    <property type="term" value="P:regulation of DNA-templated transcription"/>
    <property type="evidence" value="ECO:0007669"/>
    <property type="project" value="InterPro"/>
</dbReference>
<dbReference type="Gene3D" id="1.10.1220.10">
    <property type="entry name" value="Met repressor-like"/>
    <property type="match status" value="1"/>
</dbReference>
<dbReference type="Gene3D" id="1.20.1380.10">
    <property type="entry name" value="Replication modulator SeqA, C-terminal DNA-binding domain"/>
    <property type="match status" value="1"/>
</dbReference>
<dbReference type="HAMAP" id="MF_00908">
    <property type="entry name" value="SeqA"/>
    <property type="match status" value="1"/>
</dbReference>
<dbReference type="InterPro" id="IPR013321">
    <property type="entry name" value="Arc_rbn_hlx_hlx"/>
</dbReference>
<dbReference type="InterPro" id="IPR010985">
    <property type="entry name" value="Ribbon_hlx_hlx"/>
</dbReference>
<dbReference type="InterPro" id="IPR005621">
    <property type="entry name" value="SeqA"/>
</dbReference>
<dbReference type="InterPro" id="IPR026577">
    <property type="entry name" value="SeqA_DNA-bd_C"/>
</dbReference>
<dbReference type="InterPro" id="IPR036835">
    <property type="entry name" value="SeqA_DNA-bd_C_sf"/>
</dbReference>
<dbReference type="InterPro" id="IPR033761">
    <property type="entry name" value="SeqA_N"/>
</dbReference>
<dbReference type="Pfam" id="PF03925">
    <property type="entry name" value="SeqA"/>
    <property type="match status" value="1"/>
</dbReference>
<dbReference type="Pfam" id="PF17206">
    <property type="entry name" value="SeqA_N"/>
    <property type="match status" value="1"/>
</dbReference>
<dbReference type="PIRSF" id="PIRSF019401">
    <property type="entry name" value="SeqA"/>
    <property type="match status" value="1"/>
</dbReference>
<dbReference type="SUPFAM" id="SSF82808">
    <property type="entry name" value="Replication modulator SeqA, C-terminal DNA-binding domain"/>
    <property type="match status" value="1"/>
</dbReference>
<dbReference type="SUPFAM" id="SSF47598">
    <property type="entry name" value="Ribbon-helix-helix"/>
    <property type="match status" value="1"/>
</dbReference>
<evidence type="ECO:0000255" key="1">
    <source>
        <dbReference type="HAMAP-Rule" id="MF_00908"/>
    </source>
</evidence>
<reference key="1">
    <citation type="submission" date="2006-06" db="EMBL/GenBank/DDBJ databases">
        <title>Complete sequence of Pseudoalteromonas atlantica T6c.</title>
        <authorList>
            <consortium name="US DOE Joint Genome Institute"/>
            <person name="Copeland A."/>
            <person name="Lucas S."/>
            <person name="Lapidus A."/>
            <person name="Barry K."/>
            <person name="Detter J.C."/>
            <person name="Glavina del Rio T."/>
            <person name="Hammon N."/>
            <person name="Israni S."/>
            <person name="Dalin E."/>
            <person name="Tice H."/>
            <person name="Pitluck S."/>
            <person name="Saunders E."/>
            <person name="Brettin T."/>
            <person name="Bruce D."/>
            <person name="Han C."/>
            <person name="Tapia R."/>
            <person name="Gilna P."/>
            <person name="Schmutz J."/>
            <person name="Larimer F."/>
            <person name="Land M."/>
            <person name="Hauser L."/>
            <person name="Kyrpides N."/>
            <person name="Kim E."/>
            <person name="Karls A.C."/>
            <person name="Bartlett D."/>
            <person name="Higgins B.P."/>
            <person name="Richardson P."/>
        </authorList>
    </citation>
    <scope>NUCLEOTIDE SEQUENCE [LARGE SCALE GENOMIC DNA]</scope>
    <source>
        <strain>T6c / ATCC BAA-1087</strain>
    </source>
</reference>